<name>ACEA_HALH5</name>
<reference key="1">
    <citation type="journal article" date="2000" name="Nucleic Acids Res.">
        <title>Complete genome sequence of the alkaliphilic bacterium Bacillus halodurans and genomic sequence comparison with Bacillus subtilis.</title>
        <authorList>
            <person name="Takami H."/>
            <person name="Nakasone K."/>
            <person name="Takaki Y."/>
            <person name="Maeno G."/>
            <person name="Sasaki R."/>
            <person name="Masui N."/>
            <person name="Fuji F."/>
            <person name="Hirama C."/>
            <person name="Nakamura Y."/>
            <person name="Ogasawara N."/>
            <person name="Kuhara S."/>
            <person name="Horikoshi K."/>
        </authorList>
    </citation>
    <scope>NUCLEOTIDE SEQUENCE [LARGE SCALE GENOMIC DNA]</scope>
    <source>
        <strain>ATCC BAA-125 / DSM 18197 / FERM 7344 / JCM 9153 / C-125</strain>
    </source>
</reference>
<comment type="function">
    <text evidence="1">Involved in the metabolic adaptation in response to environmental changes. Catalyzes the reversible formation of succinate and glyoxylate from isocitrate, a key step of the glyoxylate cycle, which operates as an anaplerotic route for replenishing the tricarboxylic acid cycle during growth on fatty acid substrates.</text>
</comment>
<comment type="catalytic activity">
    <reaction evidence="1">
        <text>D-threo-isocitrate = glyoxylate + succinate</text>
        <dbReference type="Rhea" id="RHEA:13245"/>
        <dbReference type="ChEBI" id="CHEBI:15562"/>
        <dbReference type="ChEBI" id="CHEBI:30031"/>
        <dbReference type="ChEBI" id="CHEBI:36655"/>
        <dbReference type="EC" id="4.1.3.1"/>
    </reaction>
</comment>
<comment type="cofactor">
    <cofactor evidence="1">
        <name>Mg(2+)</name>
        <dbReference type="ChEBI" id="CHEBI:18420"/>
    </cofactor>
</comment>
<comment type="pathway">
    <text evidence="1">Carbohydrate metabolism; glyoxylate cycle; (S)-malate from isocitrate: step 1/2.</text>
</comment>
<comment type="subunit">
    <text evidence="1">Homotetramer.</text>
</comment>
<comment type="similarity">
    <text evidence="3">Belongs to the isocitrate lyase/PEP mutase superfamily. Isocitrate lyase family.</text>
</comment>
<proteinExistence type="inferred from homology"/>
<feature type="chain" id="PRO_0000068771" description="Isocitrate lyase">
    <location>
        <begin position="1"/>
        <end position="427"/>
    </location>
</feature>
<feature type="active site" description="Proton acceptor" evidence="1">
    <location>
        <position position="188"/>
    </location>
</feature>
<feature type="binding site" evidence="1">
    <location>
        <begin position="89"/>
        <end position="91"/>
    </location>
    <ligand>
        <name>substrate</name>
    </ligand>
</feature>
<feature type="binding site" evidence="1">
    <location>
        <position position="150"/>
    </location>
    <ligand>
        <name>Mg(2+)</name>
        <dbReference type="ChEBI" id="CHEBI:18420"/>
    </ligand>
</feature>
<feature type="binding site" evidence="2">
    <location>
        <begin position="189"/>
        <end position="190"/>
    </location>
    <ligand>
        <name>substrate</name>
    </ligand>
</feature>
<feature type="binding site" evidence="1">
    <location>
        <position position="225"/>
    </location>
    <ligand>
        <name>substrate</name>
    </ligand>
</feature>
<feature type="binding site" evidence="2">
    <location>
        <begin position="310"/>
        <end position="314"/>
    </location>
    <ligand>
        <name>substrate</name>
    </ligand>
</feature>
<feature type="binding site" evidence="2">
    <location>
        <position position="344"/>
    </location>
    <ligand>
        <name>substrate</name>
    </ligand>
</feature>
<keyword id="KW-0329">Glyoxylate bypass</keyword>
<keyword id="KW-0456">Lyase</keyword>
<keyword id="KW-0460">Magnesium</keyword>
<keyword id="KW-0479">Metal-binding</keyword>
<keyword id="KW-1185">Reference proteome</keyword>
<keyword id="KW-0816">Tricarboxylic acid cycle</keyword>
<gene>
    <name type="primary">aceA</name>
    <name type="ordered locus">BH2677</name>
</gene>
<accession>Q9K9H0</accession>
<organism>
    <name type="scientific">Halalkalibacterium halodurans (strain ATCC BAA-125 / DSM 18197 / FERM 7344 / JCM 9153 / C-125)</name>
    <name type="common">Bacillus halodurans</name>
    <dbReference type="NCBI Taxonomy" id="272558"/>
    <lineage>
        <taxon>Bacteria</taxon>
        <taxon>Bacillati</taxon>
        <taxon>Bacillota</taxon>
        <taxon>Bacilli</taxon>
        <taxon>Bacillales</taxon>
        <taxon>Bacillaceae</taxon>
        <taxon>Halalkalibacterium (ex Joshi et al. 2022)</taxon>
    </lineage>
</organism>
<evidence type="ECO:0000250" key="1">
    <source>
        <dbReference type="UniProtKB" id="P0A9G6"/>
    </source>
</evidence>
<evidence type="ECO:0000250" key="2">
    <source>
        <dbReference type="UniProtKB" id="P9WKK7"/>
    </source>
</evidence>
<evidence type="ECO:0000305" key="3"/>
<dbReference type="EC" id="4.1.3.1" evidence="1"/>
<dbReference type="EMBL" id="BA000004">
    <property type="protein sequence ID" value="BAB06396.1"/>
    <property type="molecule type" value="Genomic_DNA"/>
</dbReference>
<dbReference type="PIR" id="E83984">
    <property type="entry name" value="E83984"/>
</dbReference>
<dbReference type="RefSeq" id="WP_010898826.1">
    <property type="nucleotide sequence ID" value="NC_002570.2"/>
</dbReference>
<dbReference type="SMR" id="Q9K9H0"/>
<dbReference type="STRING" id="272558.gene:10728575"/>
<dbReference type="KEGG" id="bha:BH2677"/>
<dbReference type="eggNOG" id="COG2224">
    <property type="taxonomic scope" value="Bacteria"/>
</dbReference>
<dbReference type="HOGENOM" id="CLU_019214_2_0_9"/>
<dbReference type="OrthoDB" id="8629576at2"/>
<dbReference type="UniPathway" id="UPA00703">
    <property type="reaction ID" value="UER00719"/>
</dbReference>
<dbReference type="Proteomes" id="UP000001258">
    <property type="component" value="Chromosome"/>
</dbReference>
<dbReference type="GO" id="GO:0004451">
    <property type="term" value="F:isocitrate lyase activity"/>
    <property type="evidence" value="ECO:0007669"/>
    <property type="project" value="UniProtKB-EC"/>
</dbReference>
<dbReference type="GO" id="GO:0046872">
    <property type="term" value="F:metal ion binding"/>
    <property type="evidence" value="ECO:0007669"/>
    <property type="project" value="UniProtKB-KW"/>
</dbReference>
<dbReference type="GO" id="GO:0006097">
    <property type="term" value="P:glyoxylate cycle"/>
    <property type="evidence" value="ECO:0007669"/>
    <property type="project" value="UniProtKB-UniPathway"/>
</dbReference>
<dbReference type="GO" id="GO:0006099">
    <property type="term" value="P:tricarboxylic acid cycle"/>
    <property type="evidence" value="ECO:0007669"/>
    <property type="project" value="UniProtKB-KW"/>
</dbReference>
<dbReference type="CDD" id="cd00377">
    <property type="entry name" value="ICL_PEPM"/>
    <property type="match status" value="1"/>
</dbReference>
<dbReference type="FunFam" id="3.20.20.60:FF:000005">
    <property type="entry name" value="Isocitrate lyase"/>
    <property type="match status" value="1"/>
</dbReference>
<dbReference type="Gene3D" id="3.20.20.60">
    <property type="entry name" value="Phosphoenolpyruvate-binding domains"/>
    <property type="match status" value="1"/>
</dbReference>
<dbReference type="InterPro" id="IPR039556">
    <property type="entry name" value="ICL/PEPM"/>
</dbReference>
<dbReference type="InterPro" id="IPR006254">
    <property type="entry name" value="Isocitrate_lyase"/>
</dbReference>
<dbReference type="InterPro" id="IPR018523">
    <property type="entry name" value="Isocitrate_lyase_ph_CS"/>
</dbReference>
<dbReference type="InterPro" id="IPR015813">
    <property type="entry name" value="Pyrv/PenolPyrv_kinase-like_dom"/>
</dbReference>
<dbReference type="InterPro" id="IPR040442">
    <property type="entry name" value="Pyrv_kinase-like_dom_sf"/>
</dbReference>
<dbReference type="NCBIfam" id="TIGR01346">
    <property type="entry name" value="isocit_lyase"/>
    <property type="match status" value="1"/>
</dbReference>
<dbReference type="NCBIfam" id="NF011645">
    <property type="entry name" value="PRK15063.1"/>
    <property type="match status" value="1"/>
</dbReference>
<dbReference type="PANTHER" id="PTHR21631:SF3">
    <property type="entry name" value="BIFUNCTIONAL GLYOXYLATE CYCLE PROTEIN"/>
    <property type="match status" value="1"/>
</dbReference>
<dbReference type="PANTHER" id="PTHR21631">
    <property type="entry name" value="ISOCITRATE LYASE/MALATE SYNTHASE"/>
    <property type="match status" value="1"/>
</dbReference>
<dbReference type="Pfam" id="PF00463">
    <property type="entry name" value="ICL"/>
    <property type="match status" value="1"/>
</dbReference>
<dbReference type="PIRSF" id="PIRSF001362">
    <property type="entry name" value="Isocit_lyase"/>
    <property type="match status" value="1"/>
</dbReference>
<dbReference type="SUPFAM" id="SSF51621">
    <property type="entry name" value="Phosphoenolpyruvate/pyruvate domain"/>
    <property type="match status" value="1"/>
</dbReference>
<dbReference type="PROSITE" id="PS00161">
    <property type="entry name" value="ISOCITRATE_LYASE"/>
    <property type="match status" value="1"/>
</dbReference>
<sequence>MSGWQETAEKLEMSWSNDVRWQGVERPYSGEEVVKLRGSLKIEYTLAKTGAEKLWKLLHEEDYVNALGAMTGGQAIQQVKAGLKAIYLSGWQVAADANLAGHMYPDQSLYPANSVPSVVKRINQALQRADQIQHLEGEGEVDYFAPIVADAEAGFGGQLNVFELMKAMIEAGASGVHFEDQLASEKKCGHLGGKVLIPTQTAIRNLVSARLAADVMGVPTILVARTDADAADLITSDIDPADQRFITGERTPEGFYRTNAGIEQAIARGLAYAPYADLIWCETSKPSLEEAKQFADAIHEKFPGKLLAYNCSPSFNWEANLDRATIETFQQELGKMGYKFQFVTLAGFHALNHSMFELAYGYKQRGMGAYSELQQAEFASEVKGYTATRHQREVGTGYFDQVAQTITGGTSSTTALTGSTEEAQFQK</sequence>
<protein>
    <recommendedName>
        <fullName evidence="1">Isocitrate lyase</fullName>
        <shortName evidence="1">ICL</shortName>
        <ecNumber evidence="1">4.1.3.1</ecNumber>
    </recommendedName>
    <alternativeName>
        <fullName evidence="1">Isocitrase</fullName>
    </alternativeName>
    <alternativeName>
        <fullName evidence="1">Isocitratase</fullName>
    </alternativeName>
</protein>